<comment type="function">
    <text evidence="1">Converts 2-succinyl-6-hydroxy-2,4-cyclohexadiene-1-carboxylate (SHCHC) to 2-succinylbenzoate (OSB).</text>
</comment>
<comment type="catalytic activity">
    <reaction evidence="1">
        <text>(1R,6R)-6-hydroxy-2-succinyl-cyclohexa-2,4-diene-1-carboxylate = 2-succinylbenzoate + H2O</text>
        <dbReference type="Rhea" id="RHEA:10196"/>
        <dbReference type="ChEBI" id="CHEBI:15377"/>
        <dbReference type="ChEBI" id="CHEBI:18325"/>
        <dbReference type="ChEBI" id="CHEBI:58689"/>
        <dbReference type="EC" id="4.2.1.113"/>
    </reaction>
</comment>
<comment type="cofactor">
    <cofactor evidence="1">
        <name>a divalent metal cation</name>
        <dbReference type="ChEBI" id="CHEBI:60240"/>
    </cofactor>
</comment>
<comment type="pathway">
    <text evidence="1">Quinol/quinone metabolism; 1,4-dihydroxy-2-naphthoate biosynthesis; 1,4-dihydroxy-2-naphthoate from chorismate: step 4/7.</text>
</comment>
<comment type="pathway">
    <text evidence="1">Quinol/quinone metabolism; menaquinone biosynthesis.</text>
</comment>
<comment type="similarity">
    <text evidence="1">Belongs to the mandelate racemase/muconate lactonizing enzyme family. MenC type 1 subfamily.</text>
</comment>
<proteinExistence type="inferred from homology"/>
<organism>
    <name type="scientific">Aliivibrio salmonicida (strain LFI1238)</name>
    <name type="common">Vibrio salmonicida (strain LFI1238)</name>
    <dbReference type="NCBI Taxonomy" id="316275"/>
    <lineage>
        <taxon>Bacteria</taxon>
        <taxon>Pseudomonadati</taxon>
        <taxon>Pseudomonadota</taxon>
        <taxon>Gammaproteobacteria</taxon>
        <taxon>Vibrionales</taxon>
        <taxon>Vibrionaceae</taxon>
        <taxon>Aliivibrio</taxon>
    </lineage>
</organism>
<gene>
    <name evidence="1" type="primary">menC</name>
    <name type="ordered locus">VSAL_I1102</name>
</gene>
<protein>
    <recommendedName>
        <fullName evidence="1">o-succinylbenzoate synthase</fullName>
        <shortName evidence="1">OSB synthase</shortName>
        <shortName evidence="1">OSBS</shortName>
        <ecNumber evidence="1">4.2.1.113</ecNumber>
    </recommendedName>
    <alternativeName>
        <fullName evidence="1">4-(2'-carboxyphenyl)-4-oxybutyric acid synthase</fullName>
    </alternativeName>
    <alternativeName>
        <fullName evidence="1">o-succinylbenzoic acid synthase</fullName>
    </alternativeName>
</protein>
<dbReference type="EC" id="4.2.1.113" evidence="1"/>
<dbReference type="EMBL" id="FM178379">
    <property type="protein sequence ID" value="CAQ78787.1"/>
    <property type="molecule type" value="Genomic_DNA"/>
</dbReference>
<dbReference type="RefSeq" id="WP_012549856.1">
    <property type="nucleotide sequence ID" value="NC_011312.1"/>
</dbReference>
<dbReference type="SMR" id="B6EJ59"/>
<dbReference type="KEGG" id="vsa:VSAL_I1102"/>
<dbReference type="eggNOG" id="COG1441">
    <property type="taxonomic scope" value="Bacteria"/>
</dbReference>
<dbReference type="HOGENOM" id="CLU_030273_0_1_6"/>
<dbReference type="UniPathway" id="UPA00079"/>
<dbReference type="UniPathway" id="UPA01057">
    <property type="reaction ID" value="UER00165"/>
</dbReference>
<dbReference type="Proteomes" id="UP000001730">
    <property type="component" value="Chromosome 1"/>
</dbReference>
<dbReference type="GO" id="GO:0000287">
    <property type="term" value="F:magnesium ion binding"/>
    <property type="evidence" value="ECO:0007669"/>
    <property type="project" value="UniProtKB-UniRule"/>
</dbReference>
<dbReference type="GO" id="GO:0043748">
    <property type="term" value="F:O-succinylbenzoate synthase activity"/>
    <property type="evidence" value="ECO:0007669"/>
    <property type="project" value="UniProtKB-EC"/>
</dbReference>
<dbReference type="GO" id="GO:0009234">
    <property type="term" value="P:menaquinone biosynthetic process"/>
    <property type="evidence" value="ECO:0007669"/>
    <property type="project" value="UniProtKB-UniRule"/>
</dbReference>
<dbReference type="CDD" id="cd03320">
    <property type="entry name" value="OSBS"/>
    <property type="match status" value="1"/>
</dbReference>
<dbReference type="Gene3D" id="3.20.20.120">
    <property type="entry name" value="Enolase-like C-terminal domain"/>
    <property type="match status" value="1"/>
</dbReference>
<dbReference type="Gene3D" id="3.30.390.10">
    <property type="entry name" value="Enolase-like, N-terminal domain"/>
    <property type="match status" value="1"/>
</dbReference>
<dbReference type="HAMAP" id="MF_00470">
    <property type="entry name" value="MenC_1"/>
    <property type="match status" value="1"/>
</dbReference>
<dbReference type="InterPro" id="IPR036849">
    <property type="entry name" value="Enolase-like_C_sf"/>
</dbReference>
<dbReference type="InterPro" id="IPR029017">
    <property type="entry name" value="Enolase-like_N"/>
</dbReference>
<dbReference type="InterPro" id="IPR029065">
    <property type="entry name" value="Enolase_C-like"/>
</dbReference>
<dbReference type="InterPro" id="IPR013342">
    <property type="entry name" value="Mandelate_racemase_C"/>
</dbReference>
<dbReference type="InterPro" id="IPR010196">
    <property type="entry name" value="OSB_synthase_MenC1"/>
</dbReference>
<dbReference type="InterPro" id="IPR041338">
    <property type="entry name" value="OSBS_N"/>
</dbReference>
<dbReference type="NCBIfam" id="TIGR01927">
    <property type="entry name" value="menC_gam_Gplu"/>
    <property type="match status" value="1"/>
</dbReference>
<dbReference type="NCBIfam" id="NF003473">
    <property type="entry name" value="PRK05105.1"/>
    <property type="match status" value="1"/>
</dbReference>
<dbReference type="PANTHER" id="PTHR48073:SF2">
    <property type="entry name" value="O-SUCCINYLBENZOATE SYNTHASE"/>
    <property type="match status" value="1"/>
</dbReference>
<dbReference type="PANTHER" id="PTHR48073">
    <property type="entry name" value="O-SUCCINYLBENZOATE SYNTHASE-RELATED"/>
    <property type="match status" value="1"/>
</dbReference>
<dbReference type="Pfam" id="PF21508">
    <property type="entry name" value="MenC_N"/>
    <property type="match status" value="1"/>
</dbReference>
<dbReference type="Pfam" id="PF13378">
    <property type="entry name" value="MR_MLE_C"/>
    <property type="match status" value="1"/>
</dbReference>
<dbReference type="SFLD" id="SFLDS00001">
    <property type="entry name" value="Enolase"/>
    <property type="match status" value="1"/>
</dbReference>
<dbReference type="SFLD" id="SFLDF00009">
    <property type="entry name" value="o-succinylbenzoate_synthase"/>
    <property type="match status" value="1"/>
</dbReference>
<dbReference type="SMART" id="SM00922">
    <property type="entry name" value="MR_MLE"/>
    <property type="match status" value="1"/>
</dbReference>
<dbReference type="SUPFAM" id="SSF51604">
    <property type="entry name" value="Enolase C-terminal domain-like"/>
    <property type="match status" value="1"/>
</dbReference>
<dbReference type="SUPFAM" id="SSF54826">
    <property type="entry name" value="Enolase N-terminal domain-like"/>
    <property type="match status" value="1"/>
</dbReference>
<feature type="chain" id="PRO_1000125565" description="o-succinylbenzoate synthase">
    <location>
        <begin position="1"/>
        <end position="324"/>
    </location>
</feature>
<feature type="active site" description="Proton donor" evidence="1">
    <location>
        <position position="135"/>
    </location>
</feature>
<feature type="active site" description="Proton acceptor" evidence="1">
    <location>
        <position position="237"/>
    </location>
</feature>
<feature type="binding site" evidence="1">
    <location>
        <position position="163"/>
    </location>
    <ligand>
        <name>Mg(2+)</name>
        <dbReference type="ChEBI" id="CHEBI:18420"/>
    </ligand>
</feature>
<feature type="binding site" evidence="1">
    <location>
        <position position="192"/>
    </location>
    <ligand>
        <name>Mg(2+)</name>
        <dbReference type="ChEBI" id="CHEBI:18420"/>
    </ligand>
</feature>
<feature type="binding site" evidence="1">
    <location>
        <position position="215"/>
    </location>
    <ligand>
        <name>Mg(2+)</name>
        <dbReference type="ChEBI" id="CHEBI:18420"/>
    </ligand>
</feature>
<evidence type="ECO:0000255" key="1">
    <source>
        <dbReference type="HAMAP-Rule" id="MF_00470"/>
    </source>
</evidence>
<name>MENC_ALISL</name>
<reference key="1">
    <citation type="journal article" date="2008" name="BMC Genomics">
        <title>The genome sequence of the fish pathogen Aliivibrio salmonicida strain LFI1238 shows extensive evidence of gene decay.</title>
        <authorList>
            <person name="Hjerde E."/>
            <person name="Lorentzen M.S."/>
            <person name="Holden M.T."/>
            <person name="Seeger K."/>
            <person name="Paulsen S."/>
            <person name="Bason N."/>
            <person name="Churcher C."/>
            <person name="Harris D."/>
            <person name="Norbertczak H."/>
            <person name="Quail M.A."/>
            <person name="Sanders S."/>
            <person name="Thurston S."/>
            <person name="Parkhill J."/>
            <person name="Willassen N.P."/>
            <person name="Thomson N.R."/>
        </authorList>
    </citation>
    <scope>NUCLEOTIDE SEQUENCE [LARGE SCALE GENOMIC DNA]</scope>
    <source>
        <strain>LFI1238</strain>
    </source>
</reference>
<sequence>MKTAKIYQYQLPMDSGVILRDQRLQQRDGLIIELSDGKHTAKGEIAPLPEFSQENLEQAREDLISLTQAWLNDEVLDVDANCPSVAFGFSMALLELENNLPEVGNYQVAPLCSGDPDDLVVKLNEMSGKKVAKIKVGMYEAIRDGMVANMFLELIPDLSLRLDANRGWTPKKAEQFANYVSPQYRSRIEFLEEPCHRPEESLEFSKATGIAIAWDETVRDEGFEVKAQDGVAAIVIKPTLVGSVGKCIELVEQAHLLGMQAVISSSIESSLALTQLARLAAWKTPNTIPGLDTIDLFKMQLDTPWPHCELPMQALSDLEVIWES</sequence>
<accession>B6EJ59</accession>
<keyword id="KW-0456">Lyase</keyword>
<keyword id="KW-0460">Magnesium</keyword>
<keyword id="KW-0474">Menaquinone biosynthesis</keyword>
<keyword id="KW-0479">Metal-binding</keyword>